<gene>
    <name evidence="1" type="primary">rplK</name>
    <name type="ordered locus">AFE_0315</name>
</gene>
<keyword id="KW-0488">Methylation</keyword>
<keyword id="KW-1185">Reference proteome</keyword>
<keyword id="KW-0687">Ribonucleoprotein</keyword>
<keyword id="KW-0689">Ribosomal protein</keyword>
<keyword id="KW-0694">RNA-binding</keyword>
<keyword id="KW-0699">rRNA-binding</keyword>
<sequence>MAKKITGYIKLQVKAAQANPSPPIGPALGQRGLNIMEFCKAFNAQTQGVEPGLPLPVVITVFADKSFTFEVKTPPAAVLLMKAAGLPKGSGRPNTVKVGKVSEAQIEDIAKTKMPDLNTQDIESAKRSVRGTARSMGLTVEG</sequence>
<protein>
    <recommendedName>
        <fullName evidence="1">Large ribosomal subunit protein uL11</fullName>
    </recommendedName>
    <alternativeName>
        <fullName evidence="2">50S ribosomal protein L11</fullName>
    </alternativeName>
</protein>
<feature type="chain" id="PRO_1000132852" description="Large ribosomal subunit protein uL11">
    <location>
        <begin position="1"/>
        <end position="142"/>
    </location>
</feature>
<name>RL11_ACIF2</name>
<comment type="function">
    <text evidence="1">Forms part of the ribosomal stalk which helps the ribosome interact with GTP-bound translation factors.</text>
</comment>
<comment type="subunit">
    <text evidence="1">Part of the ribosomal stalk of the 50S ribosomal subunit. Interacts with L10 and the large rRNA to form the base of the stalk. L10 forms an elongated spine to which L12 dimers bind in a sequential fashion forming a multimeric L10(L12)X complex.</text>
</comment>
<comment type="PTM">
    <text evidence="1">One or more lysine residues are methylated.</text>
</comment>
<comment type="similarity">
    <text evidence="1">Belongs to the universal ribosomal protein uL11 family.</text>
</comment>
<accession>B7J455</accession>
<evidence type="ECO:0000255" key="1">
    <source>
        <dbReference type="HAMAP-Rule" id="MF_00736"/>
    </source>
</evidence>
<evidence type="ECO:0000305" key="2"/>
<reference key="1">
    <citation type="journal article" date="2008" name="BMC Genomics">
        <title>Acidithiobacillus ferrooxidans metabolism: from genome sequence to industrial applications.</title>
        <authorList>
            <person name="Valdes J."/>
            <person name="Pedroso I."/>
            <person name="Quatrini R."/>
            <person name="Dodson R.J."/>
            <person name="Tettelin H."/>
            <person name="Blake R. II"/>
            <person name="Eisen J.A."/>
            <person name="Holmes D.S."/>
        </authorList>
    </citation>
    <scope>NUCLEOTIDE SEQUENCE [LARGE SCALE GENOMIC DNA]</scope>
    <source>
        <strain>ATCC 23270 / DSM 14882 / CIP 104768 / NCIMB 8455</strain>
    </source>
</reference>
<proteinExistence type="inferred from homology"/>
<dbReference type="EMBL" id="CP001219">
    <property type="protein sequence ID" value="ACK79676.1"/>
    <property type="molecule type" value="Genomic_DNA"/>
</dbReference>
<dbReference type="RefSeq" id="WP_012536080.1">
    <property type="nucleotide sequence ID" value="NC_011761.1"/>
</dbReference>
<dbReference type="SMR" id="B7J455"/>
<dbReference type="STRING" id="243159.AFE_0315"/>
<dbReference type="PaxDb" id="243159-AFE_0315"/>
<dbReference type="GeneID" id="65279695"/>
<dbReference type="KEGG" id="afr:AFE_0315"/>
<dbReference type="eggNOG" id="COG0080">
    <property type="taxonomic scope" value="Bacteria"/>
</dbReference>
<dbReference type="HOGENOM" id="CLU_074237_2_0_6"/>
<dbReference type="Proteomes" id="UP000001362">
    <property type="component" value="Chromosome"/>
</dbReference>
<dbReference type="GO" id="GO:0022625">
    <property type="term" value="C:cytosolic large ribosomal subunit"/>
    <property type="evidence" value="ECO:0007669"/>
    <property type="project" value="TreeGrafter"/>
</dbReference>
<dbReference type="GO" id="GO:0070180">
    <property type="term" value="F:large ribosomal subunit rRNA binding"/>
    <property type="evidence" value="ECO:0007669"/>
    <property type="project" value="UniProtKB-UniRule"/>
</dbReference>
<dbReference type="GO" id="GO:0003735">
    <property type="term" value="F:structural constituent of ribosome"/>
    <property type="evidence" value="ECO:0007669"/>
    <property type="project" value="InterPro"/>
</dbReference>
<dbReference type="GO" id="GO:0006412">
    <property type="term" value="P:translation"/>
    <property type="evidence" value="ECO:0007669"/>
    <property type="project" value="UniProtKB-UniRule"/>
</dbReference>
<dbReference type="CDD" id="cd00349">
    <property type="entry name" value="Ribosomal_L11"/>
    <property type="match status" value="1"/>
</dbReference>
<dbReference type="FunFam" id="1.10.10.250:FF:000001">
    <property type="entry name" value="50S ribosomal protein L11"/>
    <property type="match status" value="1"/>
</dbReference>
<dbReference type="FunFam" id="3.30.1550.10:FF:000001">
    <property type="entry name" value="50S ribosomal protein L11"/>
    <property type="match status" value="1"/>
</dbReference>
<dbReference type="Gene3D" id="1.10.10.250">
    <property type="entry name" value="Ribosomal protein L11, C-terminal domain"/>
    <property type="match status" value="1"/>
</dbReference>
<dbReference type="Gene3D" id="3.30.1550.10">
    <property type="entry name" value="Ribosomal protein L11/L12, N-terminal domain"/>
    <property type="match status" value="1"/>
</dbReference>
<dbReference type="HAMAP" id="MF_00736">
    <property type="entry name" value="Ribosomal_uL11"/>
    <property type="match status" value="1"/>
</dbReference>
<dbReference type="InterPro" id="IPR000911">
    <property type="entry name" value="Ribosomal_uL11"/>
</dbReference>
<dbReference type="InterPro" id="IPR006519">
    <property type="entry name" value="Ribosomal_uL11_bac-typ"/>
</dbReference>
<dbReference type="InterPro" id="IPR020783">
    <property type="entry name" value="Ribosomal_uL11_C"/>
</dbReference>
<dbReference type="InterPro" id="IPR036769">
    <property type="entry name" value="Ribosomal_uL11_C_sf"/>
</dbReference>
<dbReference type="InterPro" id="IPR020785">
    <property type="entry name" value="Ribosomal_uL11_CS"/>
</dbReference>
<dbReference type="InterPro" id="IPR020784">
    <property type="entry name" value="Ribosomal_uL11_N"/>
</dbReference>
<dbReference type="InterPro" id="IPR036796">
    <property type="entry name" value="Ribosomal_uL11_N_sf"/>
</dbReference>
<dbReference type="NCBIfam" id="TIGR01632">
    <property type="entry name" value="L11_bact"/>
    <property type="match status" value="1"/>
</dbReference>
<dbReference type="PANTHER" id="PTHR11661">
    <property type="entry name" value="60S RIBOSOMAL PROTEIN L12"/>
    <property type="match status" value="1"/>
</dbReference>
<dbReference type="PANTHER" id="PTHR11661:SF1">
    <property type="entry name" value="LARGE RIBOSOMAL SUBUNIT PROTEIN UL11M"/>
    <property type="match status" value="1"/>
</dbReference>
<dbReference type="Pfam" id="PF00298">
    <property type="entry name" value="Ribosomal_L11"/>
    <property type="match status" value="1"/>
</dbReference>
<dbReference type="Pfam" id="PF03946">
    <property type="entry name" value="Ribosomal_L11_N"/>
    <property type="match status" value="1"/>
</dbReference>
<dbReference type="SMART" id="SM00649">
    <property type="entry name" value="RL11"/>
    <property type="match status" value="1"/>
</dbReference>
<dbReference type="SUPFAM" id="SSF54747">
    <property type="entry name" value="Ribosomal L11/L12e N-terminal domain"/>
    <property type="match status" value="1"/>
</dbReference>
<dbReference type="SUPFAM" id="SSF46906">
    <property type="entry name" value="Ribosomal protein L11, C-terminal domain"/>
    <property type="match status" value="1"/>
</dbReference>
<dbReference type="PROSITE" id="PS00359">
    <property type="entry name" value="RIBOSOMAL_L11"/>
    <property type="match status" value="1"/>
</dbReference>
<organism>
    <name type="scientific">Acidithiobacillus ferrooxidans (strain ATCC 23270 / DSM 14882 / CIP 104768 / NCIMB 8455)</name>
    <name type="common">Ferrobacillus ferrooxidans (strain ATCC 23270)</name>
    <dbReference type="NCBI Taxonomy" id="243159"/>
    <lineage>
        <taxon>Bacteria</taxon>
        <taxon>Pseudomonadati</taxon>
        <taxon>Pseudomonadota</taxon>
        <taxon>Acidithiobacillia</taxon>
        <taxon>Acidithiobacillales</taxon>
        <taxon>Acidithiobacillaceae</taxon>
        <taxon>Acidithiobacillus</taxon>
    </lineage>
</organism>